<name>PG095_VACCW</name>
<keyword id="KW-0002">3D-structure</keyword>
<keyword id="KW-1015">Disulfide bond</keyword>
<keyword id="KW-0945">Host-virus interaction</keyword>
<keyword id="KW-0426">Late protein</keyword>
<keyword id="KW-0449">Lipoprotein</keyword>
<keyword id="KW-0472">Membrane</keyword>
<keyword id="KW-0519">Myristate</keyword>
<keyword id="KW-1185">Reference proteome</keyword>
<keyword id="KW-0812">Transmembrane</keyword>
<keyword id="KW-1133">Transmembrane helix</keyword>
<keyword id="KW-1161">Viral attachment to host cell</keyword>
<keyword id="KW-0261">Viral envelope protein</keyword>
<keyword id="KW-1162">Viral penetration into host cytoplasm</keyword>
<keyword id="KW-0946">Virion</keyword>
<keyword id="KW-1160">Virus entry into host cell</keyword>
<accession>P07612</accession>
<accession>Q76ZT7</accession>
<evidence type="ECO:0000255" key="1"/>
<evidence type="ECO:0000269" key="2">
    <source>
    </source>
</evidence>
<evidence type="ECO:0000269" key="3">
    <source>
    </source>
</evidence>
<evidence type="ECO:0000269" key="4">
    <source>
    </source>
</evidence>
<evidence type="ECO:0000269" key="5">
    <source>
    </source>
</evidence>
<evidence type="ECO:0000269" key="6">
    <source>
    </source>
</evidence>
<evidence type="ECO:0000269" key="7">
    <source>
    </source>
</evidence>
<evidence type="ECO:0000269" key="8">
    <source>
    </source>
</evidence>
<evidence type="ECO:0000269" key="9">
    <source>
    </source>
</evidence>
<evidence type="ECO:0000305" key="10"/>
<evidence type="ECO:0000305" key="11">
    <source>
    </source>
</evidence>
<evidence type="ECO:0007829" key="12">
    <source>
        <dbReference type="PDB" id="1YPY"/>
    </source>
</evidence>
<evidence type="ECO:0007829" key="13">
    <source>
        <dbReference type="PDB" id="2I9L"/>
    </source>
</evidence>
<reference key="1">
    <citation type="journal article" date="1985" name="Nucleic Acids Res.">
        <title>Nucleotide sequence of a cluster of early and late genes in a conserved segment of the vaccinia virus genome.</title>
        <authorList>
            <person name="Plucienniczak A."/>
            <person name="Schroeder E."/>
            <person name="Zettlmeissl G."/>
            <person name="Streeck R.E."/>
        </authorList>
    </citation>
    <scope>NUCLEOTIDE SEQUENCE [GENOMIC DNA]</scope>
</reference>
<reference key="2">
    <citation type="submission" date="2003-02" db="EMBL/GenBank/DDBJ databases">
        <title>Sequencing of the coding region of Vaccinia-WR to an average 9-fold redundancy and an error rate of 0.16/10kb.</title>
        <authorList>
            <person name="Esposito J.J."/>
            <person name="Frace A.M."/>
            <person name="Sammons S.A."/>
            <person name="Olsen-Rasmussen M."/>
            <person name="Osborne J."/>
            <person name="Wohlhueter R."/>
        </authorList>
    </citation>
    <scope>NUCLEOTIDE SEQUENCE [LARGE SCALE GENOMIC DNA]</scope>
</reference>
<reference key="3">
    <citation type="journal article" date="1990" name="J. Virol.">
        <title>Use of a cell-free system to identify the vaccinia virus L1R gene product as the major late myristylated virion protein M25.</title>
        <authorList>
            <person name="Franke C.A."/>
            <person name="Wilson E.M."/>
            <person name="Hruby D.E."/>
        </authorList>
    </citation>
    <scope>IDENTIFICATION</scope>
    <scope>MYRISTOYLATION AT GLY-2</scope>
</reference>
<reference key="4">
    <citation type="journal article" date="1993" name="J. Biol. Chem.">
        <title>An NH2-terminal peptide from the vaccinia virus L1R protein directs the myristylation and virion envelope localization of a heterologous fusion protein.</title>
        <authorList>
            <person name="Ravanello M.P."/>
            <person name="Franke C.A."/>
            <person name="Hruby D.E."/>
        </authorList>
    </citation>
    <scope>CHARACTERIZATION</scope>
</reference>
<reference key="5">
    <citation type="journal article" date="1994" name="J. Virol.">
        <title>Conditional lethal expression of the vaccinia virus L1R myristylated protein reveals a role in virion assembly.</title>
        <authorList>
            <person name="Ravanello M.P."/>
            <person name="Hruby D.E."/>
        </authorList>
    </citation>
    <scope>FUNCTION</scope>
    <scope>MUTAGENESIS OF GLY-2</scope>
</reference>
<reference key="6">
    <citation type="journal article" date="1997" name="J. Virol.">
        <title>Identification and analysis of three myristylated vaccinia virus late proteins.</title>
        <authorList>
            <person name="Martin K.H."/>
            <person name="Grosenbach D.W."/>
            <person name="Franke C.A."/>
            <person name="Hruby D.E."/>
        </authorList>
    </citation>
    <scope>MYRISTOYLATION AT GLY-2</scope>
    <scope>SUBCELLULAR LOCATION</scope>
    <scope>MUTAGENESIS OF GLY-2</scope>
</reference>
<reference key="7">
    <citation type="journal article" date="2002" name="Proc. Natl. Acad. Sci. U.S.A.">
        <title>Complete pathway for protein disulfide bond formation encoded by poxviruses.</title>
        <authorList>
            <person name="Senkevich T.G."/>
            <person name="White C.L."/>
            <person name="Koonin E.V."/>
            <person name="Moss B."/>
        </authorList>
    </citation>
    <scope>DISULFIDE BOND BY OPG088</scope>
</reference>
<reference key="8">
    <citation type="journal article" date="2005" name="Virol. J.">
        <title>Importance of disulphide bonds for vaccinia virus L1R protein function.</title>
        <authorList>
            <person name="Blouch R.E."/>
            <person name="Byrd C.M."/>
            <person name="Hruby D.E."/>
        </authorList>
    </citation>
    <scope>DISULFIDE BONDS</scope>
    <scope>MUTAGENESIS OF CYS-34; CYS-49; CYS-57; CYS-116; CYS-136 AND CYS-158</scope>
</reference>
<reference key="9">
    <citation type="journal article" date="2008" name="J. Virol.">
        <title>Vaccinia virus l1 protein is required for cell entry and membrane fusion.</title>
        <authorList>
            <person name="Bisht H."/>
            <person name="Weisberg A.S."/>
            <person name="Moss B."/>
        </authorList>
    </citation>
    <scope>FUNCTION</scope>
    <scope>INDUCTION</scope>
</reference>
<reference key="10">
    <citation type="journal article" date="2009" name="Virology">
        <title>Vaccinia virus L1 binds to cell surfaces and blocks virus entry independently of glycosaminoglycans.</title>
        <authorList>
            <person name="Foo C.H."/>
            <person name="Lou H."/>
            <person name="Whitbeck J.C."/>
            <person name="Ponce-de-Leon M."/>
            <person name="Atanasiu D."/>
            <person name="Eisenberg R.J."/>
            <person name="Cohen G.H."/>
        </authorList>
    </citation>
    <scope>FUNCTION</scope>
</reference>
<reference key="11">
    <citation type="journal article" date="2005" name="Proc. Natl. Acad. Sci. U.S.A.">
        <title>The 1.51-Angstrom structure of the poxvirus L1 protein, a target of potent neutralizing antibodies.</title>
        <authorList>
            <person name="Su H.P."/>
            <person name="Garman S.C."/>
            <person name="Allison T.J."/>
            <person name="Fogg C."/>
            <person name="Moss B."/>
            <person name="Garboczi D.N."/>
        </authorList>
    </citation>
    <scope>X-RAY CRYSTALLOGRAPHY (1.51 ANGSTROMS) OF 1-185</scope>
</reference>
<reference key="12">
    <citation type="journal article" date="2015" name="J. Virol.">
        <title>Deciphering poxvirus gene expression by RNA sequencing and ribosome profiling.</title>
        <authorList>
            <person name="Yang Z."/>
            <person name="Cao S."/>
            <person name="Martens C.A."/>
            <person name="Porcella S.F."/>
            <person name="Xie Z."/>
            <person name="Ma M."/>
            <person name="Shen B."/>
            <person name="Moss B."/>
        </authorList>
    </citation>
    <scope>INDUCTION</scope>
</reference>
<reference key="13">
    <citation type="journal article" date="2021" name="J. Virol.">
        <title>Insights into the Organization of the Poxvirus Multicomponent Entry-Fusion Complex from Proximity Analyses in Living Infected Cells.</title>
        <authorList>
            <person name="Schin A.M."/>
            <person name="Diesterbeck U.S."/>
            <person name="Moss B."/>
        </authorList>
    </citation>
    <scope>FUNCTION</scope>
</reference>
<protein>
    <recommendedName>
        <fullName>Entry-fusion complex associated protein OPG095</fullName>
    </recommendedName>
    <alternativeName>
        <fullName>EFC-associated protein OPG095</fullName>
    </alternativeName>
    <alternativeName>
        <fullName>Protein L1</fullName>
    </alternativeName>
    <alternativeName>
        <fullName>Virion membrane protein M25</fullName>
    </alternativeName>
</protein>
<organismHost>
    <name type="scientific">Bos taurus</name>
    <name type="common">Bovine</name>
    <dbReference type="NCBI Taxonomy" id="9913"/>
</organismHost>
<comment type="function">
    <text evidence="7">Component of the entry fusion complex (EFC), which consists of 11 proteins. During cell infection, this complex mediates entry of the virion core into the host cytoplasm by a two-step mechanism consisting of lipid mixing of the viral and cellular membranes and subsequent pore formation.</text>
</comment>
<comment type="subunit">
    <text evidence="7">Component of the entry fusion complex (EFC) composed of OPG053/F9, OPG076/O3, OPG086/G3, OPG094/G9, OPG095/L1, OPG099/L5, OPG107/H2, OPG143/A16, OPG104/J5, OPG147/A21 and OPG155/A28. Except for OPG095/L1 and OPG053/F9, each of the EFC proteins is required for assembly or stability of the complex.</text>
</comment>
<comment type="subcellular location">
    <subcellularLocation>
        <location evidence="10">Virion membrane</location>
        <topology evidence="11">Single-pass membrane protein</topology>
    </subcellularLocation>
    <text evidence="9 11">Localizes to the membrane surrounding the core of mature virus particles (MV).</text>
</comment>
<comment type="induction">
    <text evidence="4 6">Expressed in the late phase of the viral replicative cycle.</text>
</comment>
<comment type="PTM">
    <text evidence="5 9">Myristoylated.</text>
</comment>
<comment type="PTM">
    <text evidence="2">Disulfid bonds are oxidized in the cytoplasm by OPG088 protein.</text>
</comment>
<comment type="PTM">
    <text evidence="11">Unglycosylated because produced in viral factories instead of the classic ER -Golgi route.</text>
</comment>
<comment type="similarity">
    <text evidence="10">Belongs to the orthopoxvirus OPG095 family.</text>
</comment>
<sequence>MGAAASIQTTVNTLSERISSKLEQEANASAQTKCDIEIGNFYIRQNHGCNLTVKNMCSADADAQLDAVLSAATETYSGLTPEQKAYVPAMFTAALNIQTSVNTVVRDFENYVKQTCNSSAVVDNKLKIQNVIIDECYGAPGSPTNLEFINTGSSKGNCAIKALMQLTTKATTQIAPKQVAGTGVQFYMIVIGVIILAALFMYYAKRMLFTSTNDKIKLILANKENVHWTTYMDTFFRTSPMVIATTDMQN</sequence>
<feature type="initiator methionine" description="Removed; by host">
    <location>
        <position position="1"/>
    </location>
</feature>
<feature type="chain" id="PRO_0000099613" description="Entry-fusion complex associated protein OPG095">
    <location>
        <begin position="2"/>
        <end position="250"/>
    </location>
</feature>
<feature type="topological domain" description="Virion surface" evidence="1">
    <location>
        <begin position="2"/>
        <end position="183"/>
    </location>
</feature>
<feature type="transmembrane region" description="Helical" evidence="1">
    <location>
        <begin position="184"/>
        <end position="204"/>
    </location>
</feature>
<feature type="topological domain" description="Intravirion" evidence="1">
    <location>
        <begin position="205"/>
        <end position="250"/>
    </location>
</feature>
<feature type="region of interest" description="Targeting to MV membrane">
    <location>
        <begin position="2"/>
        <end position="12"/>
    </location>
</feature>
<feature type="lipid moiety-binding region" description="N-myristoyl glycine; by host" evidence="5 9">
    <location>
        <position position="2"/>
    </location>
</feature>
<feature type="disulfide bond" description="by OPG088" evidence="2 3">
    <location>
        <begin position="34"/>
        <end position="57"/>
    </location>
</feature>
<feature type="disulfide bond" description="by OPG088" evidence="2 3">
    <location>
        <begin position="49"/>
        <end position="136"/>
    </location>
</feature>
<feature type="disulfide bond" description="by OPG088" evidence="2 3">
    <location>
        <begin position="116"/>
        <end position="158"/>
    </location>
</feature>
<feature type="mutagenesis site" description="Complete loss of myristoylation. Blocks the maturation of virus." evidence="8 9">
    <original>G</original>
    <variation>A</variation>
    <location>
        <position position="2"/>
    </location>
</feature>
<feature type="mutagenesis site" description="75% loss in virus production." evidence="3">
    <original>C</original>
    <variation>S</variation>
    <location>
        <position position="34"/>
    </location>
</feature>
<feature type="mutagenesis site" description="75% loss in virus production." evidence="3">
    <original>C</original>
    <variation>S</variation>
    <location>
        <position position="49"/>
    </location>
</feature>
<feature type="mutagenesis site" description="Almost no effect on virus production." evidence="3">
    <original>C</original>
    <variation>S</variation>
    <location>
        <position position="57"/>
    </location>
</feature>
<feature type="mutagenesis site" description="50% loss in virus production." evidence="3">
    <original>C</original>
    <variation>S</variation>
    <location>
        <position position="116"/>
    </location>
</feature>
<feature type="mutagenesis site" description="70% loss in virus production." evidence="3">
    <original>C</original>
    <variation>S</variation>
    <location>
        <position position="136"/>
    </location>
</feature>
<feature type="mutagenesis site" description="60% loss in virus production." evidence="3">
    <original>C</original>
    <variation>S</variation>
    <location>
        <position position="158"/>
    </location>
</feature>
<feature type="helix" evidence="12">
    <location>
        <begin position="5"/>
        <end position="25"/>
    </location>
</feature>
<feature type="strand" evidence="12">
    <location>
        <begin position="35"/>
        <end position="55"/>
    </location>
</feature>
<feature type="helix" evidence="12">
    <location>
        <begin position="61"/>
        <end position="77"/>
    </location>
</feature>
<feature type="helix" evidence="12">
    <location>
        <begin position="81"/>
        <end position="84"/>
    </location>
</feature>
<feature type="helix" evidence="12">
    <location>
        <begin position="87"/>
        <end position="95"/>
    </location>
</feature>
<feature type="turn" evidence="12">
    <location>
        <begin position="101"/>
        <end position="103"/>
    </location>
</feature>
<feature type="helix" evidence="12">
    <location>
        <begin position="104"/>
        <end position="115"/>
    </location>
</feature>
<feature type="strand" evidence="12">
    <location>
        <begin position="116"/>
        <end position="118"/>
    </location>
</feature>
<feature type="helix" evidence="12">
    <location>
        <begin position="119"/>
        <end position="122"/>
    </location>
</feature>
<feature type="strand" evidence="12">
    <location>
        <begin position="127"/>
        <end position="137"/>
    </location>
</feature>
<feature type="strand" evidence="13">
    <location>
        <begin position="140"/>
        <end position="142"/>
    </location>
</feature>
<feature type="strand" evidence="12">
    <location>
        <begin position="144"/>
        <end position="150"/>
    </location>
</feature>
<feature type="helix" evidence="12">
    <location>
        <begin position="154"/>
        <end position="174"/>
    </location>
</feature>
<dbReference type="EMBL" id="X01978">
    <property type="protein sequence ID" value="CAA26010.1"/>
    <property type="molecule type" value="Genomic_DNA"/>
</dbReference>
<dbReference type="EMBL" id="AY243312">
    <property type="protein sequence ID" value="AAO89367.1"/>
    <property type="molecule type" value="Genomic_DNA"/>
</dbReference>
<dbReference type="PIR" id="B23092">
    <property type="entry name" value="QQVZF2"/>
</dbReference>
<dbReference type="RefSeq" id="YP_232970.1">
    <property type="nucleotide sequence ID" value="NC_006998.1"/>
</dbReference>
<dbReference type="PDB" id="1YPY">
    <property type="method" value="X-ray"/>
    <property type="resolution" value="1.51 A"/>
    <property type="chains" value="A/B=2-185"/>
</dbReference>
<dbReference type="PDB" id="2I9L">
    <property type="method" value="X-ray"/>
    <property type="resolution" value="3.10 A"/>
    <property type="chains" value="I/J/K/L=2-185"/>
</dbReference>
<dbReference type="PDB" id="4U6H">
    <property type="method" value="X-ray"/>
    <property type="resolution" value="3.10 A"/>
    <property type="chains" value="E/J=1-184"/>
</dbReference>
<dbReference type="PDBsum" id="1YPY"/>
<dbReference type="PDBsum" id="2I9L"/>
<dbReference type="PDBsum" id="4U6H"/>
<dbReference type="SMR" id="P07612"/>
<dbReference type="TCDB" id="1.G.11.1.1">
    <property type="family name" value="the poxvirus cell entry protein complex (pep-c) family"/>
</dbReference>
<dbReference type="iPTMnet" id="P07612"/>
<dbReference type="ABCD" id="P07612">
    <property type="antibodies" value="5 sequenced antibodies"/>
</dbReference>
<dbReference type="DNASU" id="3707544"/>
<dbReference type="GeneID" id="3707544"/>
<dbReference type="KEGG" id="vg:3707544"/>
<dbReference type="EvolutionaryTrace" id="P07612"/>
<dbReference type="Proteomes" id="UP000000344">
    <property type="component" value="Genome"/>
</dbReference>
<dbReference type="GO" id="GO:0016020">
    <property type="term" value="C:membrane"/>
    <property type="evidence" value="ECO:0007669"/>
    <property type="project" value="UniProtKB-KW"/>
</dbReference>
<dbReference type="GO" id="GO:0019031">
    <property type="term" value="C:viral envelope"/>
    <property type="evidence" value="ECO:0007669"/>
    <property type="project" value="UniProtKB-KW"/>
</dbReference>
<dbReference type="GO" id="GO:0055036">
    <property type="term" value="C:virion membrane"/>
    <property type="evidence" value="ECO:0007669"/>
    <property type="project" value="UniProtKB-SubCell"/>
</dbReference>
<dbReference type="GO" id="GO:0046718">
    <property type="term" value="P:symbiont entry into host cell"/>
    <property type="evidence" value="ECO:0007669"/>
    <property type="project" value="UniProtKB-KW"/>
</dbReference>
<dbReference type="GO" id="GO:0019062">
    <property type="term" value="P:virion attachment to host cell"/>
    <property type="evidence" value="ECO:0007669"/>
    <property type="project" value="UniProtKB-KW"/>
</dbReference>
<dbReference type="InterPro" id="IPR003472">
    <property type="entry name" value="Virion_mem_poxvirus_L1"/>
</dbReference>
<dbReference type="Pfam" id="PF02442">
    <property type="entry name" value="L1R_F9L"/>
    <property type="match status" value="1"/>
</dbReference>
<gene>
    <name type="primary">OPG099</name>
    <name type="ordered locus">VACWR088</name>
    <name type="ORF">L1R</name>
</gene>
<proteinExistence type="evidence at protein level"/>
<organism>
    <name type="scientific">Vaccinia virus (strain Western Reserve)</name>
    <name type="common">VACV</name>
    <name type="synonym">Vaccinia virus (strain WR)</name>
    <dbReference type="NCBI Taxonomy" id="10254"/>
    <lineage>
        <taxon>Viruses</taxon>
        <taxon>Varidnaviria</taxon>
        <taxon>Bamfordvirae</taxon>
        <taxon>Nucleocytoviricota</taxon>
        <taxon>Pokkesviricetes</taxon>
        <taxon>Chitovirales</taxon>
        <taxon>Poxviridae</taxon>
        <taxon>Chordopoxvirinae</taxon>
        <taxon>Orthopoxvirus</taxon>
        <taxon>Vaccinia virus</taxon>
    </lineage>
</organism>